<reference key="1">
    <citation type="journal article" date="1997" name="Nature">
        <title>The complete genome sequence of the Gram-positive bacterium Bacillus subtilis.</title>
        <authorList>
            <person name="Kunst F."/>
            <person name="Ogasawara N."/>
            <person name="Moszer I."/>
            <person name="Albertini A.M."/>
            <person name="Alloni G."/>
            <person name="Azevedo V."/>
            <person name="Bertero M.G."/>
            <person name="Bessieres P."/>
            <person name="Bolotin A."/>
            <person name="Borchert S."/>
            <person name="Borriss R."/>
            <person name="Boursier L."/>
            <person name="Brans A."/>
            <person name="Braun M."/>
            <person name="Brignell S.C."/>
            <person name="Bron S."/>
            <person name="Brouillet S."/>
            <person name="Bruschi C.V."/>
            <person name="Caldwell B."/>
            <person name="Capuano V."/>
            <person name="Carter N.M."/>
            <person name="Choi S.-K."/>
            <person name="Codani J.-J."/>
            <person name="Connerton I.F."/>
            <person name="Cummings N.J."/>
            <person name="Daniel R.A."/>
            <person name="Denizot F."/>
            <person name="Devine K.M."/>
            <person name="Duesterhoeft A."/>
            <person name="Ehrlich S.D."/>
            <person name="Emmerson P.T."/>
            <person name="Entian K.-D."/>
            <person name="Errington J."/>
            <person name="Fabret C."/>
            <person name="Ferrari E."/>
            <person name="Foulger D."/>
            <person name="Fritz C."/>
            <person name="Fujita M."/>
            <person name="Fujita Y."/>
            <person name="Fuma S."/>
            <person name="Galizzi A."/>
            <person name="Galleron N."/>
            <person name="Ghim S.-Y."/>
            <person name="Glaser P."/>
            <person name="Goffeau A."/>
            <person name="Golightly E.J."/>
            <person name="Grandi G."/>
            <person name="Guiseppi G."/>
            <person name="Guy B.J."/>
            <person name="Haga K."/>
            <person name="Haiech J."/>
            <person name="Harwood C.R."/>
            <person name="Henaut A."/>
            <person name="Hilbert H."/>
            <person name="Holsappel S."/>
            <person name="Hosono S."/>
            <person name="Hullo M.-F."/>
            <person name="Itaya M."/>
            <person name="Jones L.-M."/>
            <person name="Joris B."/>
            <person name="Karamata D."/>
            <person name="Kasahara Y."/>
            <person name="Klaerr-Blanchard M."/>
            <person name="Klein C."/>
            <person name="Kobayashi Y."/>
            <person name="Koetter P."/>
            <person name="Koningstein G."/>
            <person name="Krogh S."/>
            <person name="Kumano M."/>
            <person name="Kurita K."/>
            <person name="Lapidus A."/>
            <person name="Lardinois S."/>
            <person name="Lauber J."/>
            <person name="Lazarevic V."/>
            <person name="Lee S.-M."/>
            <person name="Levine A."/>
            <person name="Liu H."/>
            <person name="Masuda S."/>
            <person name="Mauel C."/>
            <person name="Medigue C."/>
            <person name="Medina N."/>
            <person name="Mellado R.P."/>
            <person name="Mizuno M."/>
            <person name="Moestl D."/>
            <person name="Nakai S."/>
            <person name="Noback M."/>
            <person name="Noone D."/>
            <person name="O'Reilly M."/>
            <person name="Ogawa K."/>
            <person name="Ogiwara A."/>
            <person name="Oudega B."/>
            <person name="Park S.-H."/>
            <person name="Parro V."/>
            <person name="Pohl T.M."/>
            <person name="Portetelle D."/>
            <person name="Porwollik S."/>
            <person name="Prescott A.M."/>
            <person name="Presecan E."/>
            <person name="Pujic P."/>
            <person name="Purnelle B."/>
            <person name="Rapoport G."/>
            <person name="Rey M."/>
            <person name="Reynolds S."/>
            <person name="Rieger M."/>
            <person name="Rivolta C."/>
            <person name="Rocha E."/>
            <person name="Roche B."/>
            <person name="Rose M."/>
            <person name="Sadaie Y."/>
            <person name="Sato T."/>
            <person name="Scanlan E."/>
            <person name="Schleich S."/>
            <person name="Schroeter R."/>
            <person name="Scoffone F."/>
            <person name="Sekiguchi J."/>
            <person name="Sekowska A."/>
            <person name="Seror S.J."/>
            <person name="Serror P."/>
            <person name="Shin B.-S."/>
            <person name="Soldo B."/>
            <person name="Sorokin A."/>
            <person name="Tacconi E."/>
            <person name="Takagi T."/>
            <person name="Takahashi H."/>
            <person name="Takemaru K."/>
            <person name="Takeuchi M."/>
            <person name="Tamakoshi A."/>
            <person name="Tanaka T."/>
            <person name="Terpstra P."/>
            <person name="Tognoni A."/>
            <person name="Tosato V."/>
            <person name="Uchiyama S."/>
            <person name="Vandenbol M."/>
            <person name="Vannier F."/>
            <person name="Vassarotti A."/>
            <person name="Viari A."/>
            <person name="Wambutt R."/>
            <person name="Wedler E."/>
            <person name="Wedler H."/>
            <person name="Weitzenegger T."/>
            <person name="Winters P."/>
            <person name="Wipat A."/>
            <person name="Yamamoto H."/>
            <person name="Yamane K."/>
            <person name="Yasumoto K."/>
            <person name="Yata K."/>
            <person name="Yoshida K."/>
            <person name="Yoshikawa H.-F."/>
            <person name="Zumstein E."/>
            <person name="Yoshikawa H."/>
            <person name="Danchin A."/>
        </authorList>
    </citation>
    <scope>NUCLEOTIDE SEQUENCE [LARGE SCALE GENOMIC DNA]</scope>
    <source>
        <strain>168</strain>
    </source>
</reference>
<protein>
    <recommendedName>
        <fullName>Uncharacterized protein YlqD</fullName>
    </recommendedName>
</protein>
<keyword id="KW-1185">Reference proteome</keyword>
<gene>
    <name type="primary">ylqD</name>
    <name type="ordered locus">BSU16010</name>
</gene>
<name>YLQD_BACSU</name>
<feature type="chain" id="PRO_0000369423" description="Uncharacterized protein YlqD">
    <location>
        <begin position="1"/>
        <end position="128"/>
    </location>
</feature>
<organism>
    <name type="scientific">Bacillus subtilis (strain 168)</name>
    <dbReference type="NCBI Taxonomy" id="224308"/>
    <lineage>
        <taxon>Bacteria</taxon>
        <taxon>Bacillati</taxon>
        <taxon>Bacillota</taxon>
        <taxon>Bacilli</taxon>
        <taxon>Bacillales</taxon>
        <taxon>Bacillaceae</taxon>
        <taxon>Bacillus</taxon>
    </lineage>
</organism>
<sequence length="128" mass="15039">MQIIHRVAVMQVLTERSKEKLLASFAEKKQMLERECSQLYFQLRKHEKEQQNPNMIEQFKKAIEKRKDDIKIIDFQIAQVHTLPLGSELKEKEVDALLTIEAGDDWHEKTAANTIVIKDGKVIEIRQR</sequence>
<accession>O31739</accession>
<proteinExistence type="predicted"/>
<dbReference type="EMBL" id="AL009126">
    <property type="protein sequence ID" value="CAB13474.1"/>
    <property type="molecule type" value="Genomic_DNA"/>
</dbReference>
<dbReference type="PIR" id="D69880">
    <property type="entry name" value="D69880"/>
</dbReference>
<dbReference type="RefSeq" id="NP_389483.1">
    <property type="nucleotide sequence ID" value="NC_000964.3"/>
</dbReference>
<dbReference type="RefSeq" id="WP_003232015.1">
    <property type="nucleotide sequence ID" value="NZ_OZ025638.1"/>
</dbReference>
<dbReference type="SMR" id="O31739"/>
<dbReference type="FunCoup" id="O31739">
    <property type="interactions" value="39"/>
</dbReference>
<dbReference type="STRING" id="224308.BSU16010"/>
<dbReference type="PaxDb" id="224308-BSU16010"/>
<dbReference type="EnsemblBacteria" id="CAB13474">
    <property type="protein sequence ID" value="CAB13474"/>
    <property type="gene ID" value="BSU_16010"/>
</dbReference>
<dbReference type="GeneID" id="937226"/>
<dbReference type="KEGG" id="bsu:BSU16010"/>
<dbReference type="PATRIC" id="fig|224308.179.peg.1741"/>
<dbReference type="eggNOG" id="ENOG50349TX">
    <property type="taxonomic scope" value="Bacteria"/>
</dbReference>
<dbReference type="InParanoid" id="O31739"/>
<dbReference type="OrthoDB" id="2375961at2"/>
<dbReference type="PhylomeDB" id="O31739"/>
<dbReference type="BioCyc" id="BSUB:BSU16010-MONOMER"/>
<dbReference type="Proteomes" id="UP000001570">
    <property type="component" value="Chromosome"/>
</dbReference>
<dbReference type="Gene3D" id="6.10.140.1110">
    <property type="match status" value="1"/>
</dbReference>
<dbReference type="InterPro" id="IPR021297">
    <property type="entry name" value="YlqD"/>
</dbReference>
<dbReference type="Pfam" id="PF11068">
    <property type="entry name" value="YlqD"/>
    <property type="match status" value="1"/>
</dbReference>